<accession>P19331</accession>
<accession>Q26585</accession>
<proteinExistence type="evidence at transcript level"/>
<evidence type="ECO:0000255" key="1"/>
<evidence type="ECO:0000305" key="2"/>
<protein>
    <recommendedName>
        <fullName>23 kDa integral membrane protein</fullName>
    </recommendedName>
    <alternativeName>
        <fullName>Sm23</fullName>
    </alternativeName>
</protein>
<feature type="chain" id="PRO_0000219282" description="23 kDa integral membrane protein">
    <location>
        <begin position="1"/>
        <end position="218"/>
    </location>
</feature>
<feature type="topological domain" description="Cytoplasmic" evidence="1">
    <location>
        <begin position="1"/>
        <end position="12"/>
    </location>
</feature>
<feature type="transmembrane region" description="Helical" evidence="1">
    <location>
        <begin position="13"/>
        <end position="36"/>
    </location>
</feature>
<feature type="topological domain" description="Extracellular" evidence="1">
    <location>
        <begin position="37"/>
        <end position="55"/>
    </location>
</feature>
<feature type="transmembrane region" description="Helical" evidence="1">
    <location>
        <begin position="56"/>
        <end position="71"/>
    </location>
</feature>
<feature type="topological domain" description="Cytoplasmic" evidence="1">
    <location>
        <begin position="72"/>
        <end position="82"/>
    </location>
</feature>
<feature type="transmembrane region" description="Helical" evidence="1">
    <location>
        <begin position="83"/>
        <end position="108"/>
    </location>
</feature>
<feature type="topological domain" description="Extracellular" evidence="1">
    <location>
        <begin position="109"/>
        <end position="183"/>
    </location>
</feature>
<feature type="transmembrane region" description="Helical" evidence="1">
    <location>
        <begin position="184"/>
        <end position="205"/>
    </location>
</feature>
<feature type="topological domain" description="Cytoplasmic" evidence="1">
    <location>
        <begin position="206"/>
        <end position="218"/>
    </location>
</feature>
<feature type="glycosylation site" description="N-linked (GlcNAc...) asparagine" evidence="1">
    <location>
        <position position="165"/>
    </location>
</feature>
<feature type="sequence conflict" description="In Ref. 2; AAA73525." evidence="2" ref="2">
    <original>D</original>
    <variation>N</variation>
    <location>
        <position position="151"/>
    </location>
</feature>
<organism>
    <name type="scientific">Schistosoma mansoni</name>
    <name type="common">Blood fluke</name>
    <dbReference type="NCBI Taxonomy" id="6183"/>
    <lineage>
        <taxon>Eukaryota</taxon>
        <taxon>Metazoa</taxon>
        <taxon>Spiralia</taxon>
        <taxon>Lophotrochozoa</taxon>
        <taxon>Platyhelminthes</taxon>
        <taxon>Trematoda</taxon>
        <taxon>Digenea</taxon>
        <taxon>Strigeidida</taxon>
        <taxon>Schistosomatoidea</taxon>
        <taxon>Schistosomatidae</taxon>
        <taxon>Schistosoma</taxon>
    </lineage>
</organism>
<name>IM23_SCHMA</name>
<reference key="1">
    <citation type="journal article" date="1990" name="J. Immunol.">
        <title>An immunogenic Mr 23,000 integral membrane protein of Schistosoma mansoni worms that closely resembles a human tumor-associated antigen.</title>
        <authorList>
            <person name="Wright M.D."/>
            <person name="Henkle K.J."/>
            <person name="Mitchell G.F."/>
        </authorList>
    </citation>
    <scope>NUCLEOTIDE SEQUENCE [MRNA]</scope>
</reference>
<reference key="2">
    <citation type="journal article" date="1995" name="Exp. Parasitol.">
        <title>Schistosoma mansoni: characterization of the gene encoding Sm23, an integral membrane protein.</title>
        <authorList>
            <person name="Lee K.W."/>
            <person name="Shalaby K.A."/>
            <person name="Medhat A.M."/>
            <person name="Shi H."/>
            <person name="Yang Q."/>
            <person name="Karim A.M."/>
            <person name="Loverde P.T."/>
        </authorList>
    </citation>
    <scope>NUCLEOTIDE SEQUENCE [GENOMIC DNA]</scope>
    <source>
        <strain>NMRI</strain>
    </source>
</reference>
<dbReference type="EMBL" id="M34453">
    <property type="protein sequence ID" value="AAA29900.1"/>
    <property type="molecule type" value="mRNA"/>
</dbReference>
<dbReference type="EMBL" id="L34755">
    <property type="protein sequence ID" value="AAA73525.1"/>
    <property type="molecule type" value="Genomic_DNA"/>
</dbReference>
<dbReference type="PIR" id="A43522">
    <property type="entry name" value="A43522"/>
</dbReference>
<dbReference type="SMR" id="P19331"/>
<dbReference type="FunCoup" id="P19331">
    <property type="interactions" value="138"/>
</dbReference>
<dbReference type="STRING" id="6183.P19331"/>
<dbReference type="ABCD" id="P19331">
    <property type="antibodies" value="2 sequenced antibodies"/>
</dbReference>
<dbReference type="eggNOG" id="KOG3882">
    <property type="taxonomic scope" value="Eukaryota"/>
</dbReference>
<dbReference type="HOGENOM" id="CLU_055524_4_2_1"/>
<dbReference type="InParanoid" id="P19331"/>
<dbReference type="Proteomes" id="UP000008854">
    <property type="component" value="Unassembled WGS sequence"/>
</dbReference>
<dbReference type="GO" id="GO:0005886">
    <property type="term" value="C:plasma membrane"/>
    <property type="evidence" value="ECO:0007669"/>
    <property type="project" value="TreeGrafter"/>
</dbReference>
<dbReference type="CDD" id="cd03127">
    <property type="entry name" value="tetraspanin_LEL"/>
    <property type="match status" value="1"/>
</dbReference>
<dbReference type="Gene3D" id="1.10.1450.10">
    <property type="entry name" value="Tetraspanin"/>
    <property type="match status" value="1"/>
</dbReference>
<dbReference type="InterPro" id="IPR018499">
    <property type="entry name" value="Tetraspanin/Peripherin"/>
</dbReference>
<dbReference type="InterPro" id="IPR000301">
    <property type="entry name" value="Tetraspanin_animals"/>
</dbReference>
<dbReference type="InterPro" id="IPR018503">
    <property type="entry name" value="Tetraspanin_CS"/>
</dbReference>
<dbReference type="InterPro" id="IPR008952">
    <property type="entry name" value="Tetraspanin_EC2_sf"/>
</dbReference>
<dbReference type="PANTHER" id="PTHR19282">
    <property type="entry name" value="TETRASPANIN"/>
    <property type="match status" value="1"/>
</dbReference>
<dbReference type="PANTHER" id="PTHR19282:SF544">
    <property type="entry name" value="TETRASPANIN"/>
    <property type="match status" value="1"/>
</dbReference>
<dbReference type="Pfam" id="PF00335">
    <property type="entry name" value="Tetraspanin"/>
    <property type="match status" value="1"/>
</dbReference>
<dbReference type="PIRSF" id="PIRSF002419">
    <property type="entry name" value="Tetraspanin"/>
    <property type="match status" value="1"/>
</dbReference>
<dbReference type="PRINTS" id="PR00259">
    <property type="entry name" value="TMFOUR"/>
</dbReference>
<dbReference type="SUPFAM" id="SSF48652">
    <property type="entry name" value="Tetraspanin"/>
    <property type="match status" value="1"/>
</dbReference>
<dbReference type="PROSITE" id="PS00421">
    <property type="entry name" value="TM4_1"/>
    <property type="match status" value="1"/>
</dbReference>
<keyword id="KW-0325">Glycoprotein</keyword>
<keyword id="KW-0472">Membrane</keyword>
<keyword id="KW-1185">Reference proteome</keyword>
<keyword id="KW-0812">Transmembrane</keyword>
<keyword id="KW-1133">Transmembrane helix</keyword>
<sequence length="218" mass="23684">MATLGTGMRCLKSCVFVLNIICLLCSLVLIGAGAYVEVKFSQYGDNLHKVWQAAPIAIIVVGVIILIVSFLGCCGAIKENVCMLYMYAFFLVVLLIAELAAAIVAVVYKDRIDSEIDALMTGALDKPTKEITEFMNLIQSSFHCCGAKGPDDYRGNVPASCKEENLTYTEGCVSVFGAFLKRNLVIVACVAFGVCFFQLLSIVIACCLGRQIKEYENV</sequence>
<comment type="subcellular location">
    <subcellularLocation>
        <location>Membrane</location>
        <topology>Multi-pass membrane protein</topology>
    </subcellularLocation>
</comment>
<comment type="similarity">
    <text evidence="2">Belongs to the tetraspanin (TM4SF) family.</text>
</comment>